<sequence>MPLSYQHFRKLLLLDEEAGPLEEELPRLADEGLNRRVAEDLNLGNLNVSIPWTHKVGNFTGLYSSTVPCFNPNWQTPSFPDIHLQEDIVDRCQQFVGPLTVNENRRLKLIMPARFYPNVTKYLPLDKGIKPYYPEHVVNHYFQTRHYLHTLWKAGILYKRESTRSASFCGSPYSWEQDLQHGRLVFQTSKRHGDKSCCPQSPGILSRSSVGPCIQSQLRQSRLGPQPAQGQLAGRQQGGSGSIRARVHPSPWGTVGVEPSGSGPTHNCASSSSSCLHQSAVRKAAYSLVSTSKGYSSSGHAVELHHFPPNSSRSQSQGPVLSCWWLQFRNSEPCSEYCLCHIVNLIEDWGPCTEHGEHLIRTPRTPARVTGGVFLVDKNPHNTTESRLVVDFSQFSRANTRVSWPKFAVPNLQSLTNLLSSNLSWLSLDVSAAFYHLPLHPAAMPHLLVGSSGLSRYVARLSSNSRIINNQHRTMQNLHNSCSRNLYVSLMLLYKTYGRKLHLYSHPIILGFRKIPMGVGLSPFLLAQFTSAICSVVRRAFPHCLAFSYMDDVVLGAKSVQHLESLYAAVTHFLLSLGIHLNPHKTKRWGYSLNFMGYVIGSWGTLPQEHIVQKIKMCFRKLPVNRPIDWKVCQRIVGLLGFAAPFTQCGYPALMPLYACIQAKQAFTFSPTYKAFLRNQYLNLYPVARQRPGLCQVFADATPTGWGLAIGHQRMRGTFVSPLPIHTAELLAACFARSRSGAKLIGTDNSVVLSRKYTSFPWLLGCAANWILRGTSFVYVPSALNPADDPSRGRLGLYRPLLRLLYRPTTGRTSLYADSPSVPSHLPDRVHFASPLHVAWRPP</sequence>
<gene>
    <name evidence="1" type="primary">P</name>
</gene>
<feature type="chain" id="PRO_0000323255" description="Protein P">
    <location>
        <begin position="1"/>
        <end position="843"/>
    </location>
</feature>
<feature type="domain" description="Reverse transcriptase" evidence="1">
    <location>
        <begin position="357"/>
        <end position="600"/>
    </location>
</feature>
<feature type="region of interest" description="Terminal protein domain (TP)" evidence="1">
    <location>
        <begin position="1"/>
        <end position="177"/>
    </location>
</feature>
<feature type="region of interest" description="Spacer" evidence="1">
    <location>
        <begin position="178"/>
        <end position="346"/>
    </location>
</feature>
<feature type="region of interest" description="Disordered" evidence="2">
    <location>
        <begin position="220"/>
        <end position="265"/>
    </location>
</feature>
<feature type="region of interest" description="Polymerase/reverse transcriptase domain (RT)" evidence="1">
    <location>
        <begin position="347"/>
        <end position="690"/>
    </location>
</feature>
<feature type="compositionally biased region" description="Low complexity" evidence="2">
    <location>
        <begin position="223"/>
        <end position="235"/>
    </location>
</feature>
<feature type="binding site" evidence="1">
    <location>
        <position position="429"/>
    </location>
    <ligand>
        <name>Mg(2+)</name>
        <dbReference type="ChEBI" id="CHEBI:18420"/>
        <note>catalytic</note>
    </ligand>
</feature>
<feature type="binding site" evidence="1">
    <location>
        <position position="551"/>
    </location>
    <ligand>
        <name>Mg(2+)</name>
        <dbReference type="ChEBI" id="CHEBI:18420"/>
        <note>catalytic</note>
    </ligand>
</feature>
<feature type="binding site" evidence="1">
    <location>
        <position position="552"/>
    </location>
    <ligand>
        <name>Mg(2+)</name>
        <dbReference type="ChEBI" id="CHEBI:18420"/>
        <note>catalytic</note>
    </ligand>
</feature>
<feature type="site" description="Priming of reverse-transcription by covalently linking the first nucleotide of the (-)DNA" evidence="1">
    <location>
        <position position="63"/>
    </location>
</feature>
<keyword id="KW-0235">DNA replication</keyword>
<keyword id="KW-0238">DNA-binding</keyword>
<keyword id="KW-0239">DNA-directed DNA polymerase</keyword>
<keyword id="KW-0255">Endonuclease</keyword>
<keyword id="KW-0945">Host-virus interaction</keyword>
<keyword id="KW-0378">Hydrolase</keyword>
<keyword id="KW-1090">Inhibition of host innate immune response by virus</keyword>
<keyword id="KW-1113">Inhibition of host RLR pathway by virus</keyword>
<keyword id="KW-0460">Magnesium</keyword>
<keyword id="KW-0479">Metal-binding</keyword>
<keyword id="KW-0511">Multifunctional enzyme</keyword>
<keyword id="KW-0540">Nuclease</keyword>
<keyword id="KW-0548">Nucleotidyltransferase</keyword>
<keyword id="KW-0695">RNA-directed DNA polymerase</keyword>
<keyword id="KW-0808">Transferase</keyword>
<keyword id="KW-0899">Viral immunoevasion</keyword>
<name>DPOL_HBVB3</name>
<evidence type="ECO:0000255" key="1">
    <source>
        <dbReference type="HAMAP-Rule" id="MF_04073"/>
    </source>
</evidence>
<evidence type="ECO:0000256" key="2">
    <source>
        <dbReference type="SAM" id="MobiDB-lite"/>
    </source>
</evidence>
<organism>
    <name type="scientific">Hepatitis B virus genotype B2 (isolate Vietnam/9873/1997)</name>
    <name type="common">HBV-B</name>
    <dbReference type="NCBI Taxonomy" id="489461"/>
    <lineage>
        <taxon>Viruses</taxon>
        <taxon>Riboviria</taxon>
        <taxon>Pararnavirae</taxon>
        <taxon>Artverviricota</taxon>
        <taxon>Revtraviricetes</taxon>
        <taxon>Blubervirales</taxon>
        <taxon>Hepadnaviridae</taxon>
        <taxon>Orthohepadnavirus</taxon>
        <taxon>Hepatitis B virus</taxon>
    </lineage>
</organism>
<proteinExistence type="inferred from homology"/>
<accession>Q9QAB8</accession>
<protein>
    <recommendedName>
        <fullName evidence="1">Protein P</fullName>
    </recommendedName>
    <domain>
        <recommendedName>
            <fullName evidence="1">DNA-directed DNA polymerase</fullName>
            <ecNumber evidence="1">2.7.7.7</ecNumber>
        </recommendedName>
    </domain>
    <domain>
        <recommendedName>
            <fullName evidence="1">RNA-directed DNA polymerase</fullName>
            <ecNumber evidence="1">2.7.7.49</ecNumber>
        </recommendedName>
    </domain>
    <domain>
        <recommendedName>
            <fullName evidence="1">Ribonuclease H</fullName>
            <ecNumber evidence="1">3.1.26.4</ecNumber>
        </recommendedName>
    </domain>
</protein>
<reference key="1">
    <citation type="journal article" date="2000" name="J. Gen. Virol.">
        <title>Long-term mutation rates in the hepatitis B virus genome.</title>
        <authorList>
            <person name="Hannoun C."/>
            <person name="Horal P."/>
            <person name="Lindh M."/>
        </authorList>
    </citation>
    <scope>NUCLEOTIDE SEQUENCE [GENOMIC DNA]</scope>
</reference>
<reference key="2">
    <citation type="journal article" date="2007" name="World J. Gastroenterol.">
        <title>Hepatitis B virus replication.</title>
        <authorList>
            <person name="Beck J."/>
            <person name="Nassal M."/>
        </authorList>
    </citation>
    <scope>REVIEW</scope>
</reference>
<organismHost>
    <name type="scientific">Homo sapiens</name>
    <name type="common">Human</name>
    <dbReference type="NCBI Taxonomy" id="9606"/>
</organismHost>
<organismHost>
    <name type="scientific">Pan troglodytes</name>
    <name type="common">Chimpanzee</name>
    <dbReference type="NCBI Taxonomy" id="9598"/>
</organismHost>
<comment type="function">
    <text evidence="1">Multifunctional enzyme that converts the viral RNA genome into dsDNA in viral cytoplasmic capsids. This enzyme displays a DNA polymerase activity that can copy either DNA or RNA templates, and a ribonuclease H (RNase H) activity that cleaves the RNA strand of RNA-DNA heteroduplexes in a partially processive 3'- to 5'-endonucleasic mode. Neo-synthesized pregenomic RNA (pgRNA) are encapsidated together with the P protein, and reverse-transcribed inside the nucleocapsid. Initiation of reverse-transcription occurs first by binding the epsilon loop on the pgRNA genome, and is initiated by protein priming, thereby the 5'-end of (-)DNA is covalently linked to P protein. Partial (+)DNA is synthesized from the (-)DNA template and generates the relaxed circular DNA (RC-DNA) genome. After budding and infection, the RC-DNA migrates in the nucleus, and is converted into a plasmid-like covalently closed circular DNA (cccDNA). The activity of P protein does not seem to be necessary for cccDNA generation, and is presumably released from (+)DNA by host nuclear DNA repair machinery.</text>
</comment>
<comment type="catalytic activity">
    <reaction evidence="1">
        <text>DNA(n) + a 2'-deoxyribonucleoside 5'-triphosphate = DNA(n+1) + diphosphate</text>
        <dbReference type="Rhea" id="RHEA:22508"/>
        <dbReference type="Rhea" id="RHEA-COMP:17339"/>
        <dbReference type="Rhea" id="RHEA-COMP:17340"/>
        <dbReference type="ChEBI" id="CHEBI:33019"/>
        <dbReference type="ChEBI" id="CHEBI:61560"/>
        <dbReference type="ChEBI" id="CHEBI:173112"/>
        <dbReference type="EC" id="2.7.7.7"/>
    </reaction>
</comment>
<comment type="catalytic activity">
    <reaction evidence="1">
        <text>DNA(n) + a 2'-deoxyribonucleoside 5'-triphosphate = DNA(n+1) + diphosphate</text>
        <dbReference type="Rhea" id="RHEA:22508"/>
        <dbReference type="Rhea" id="RHEA-COMP:17339"/>
        <dbReference type="Rhea" id="RHEA-COMP:17340"/>
        <dbReference type="ChEBI" id="CHEBI:33019"/>
        <dbReference type="ChEBI" id="CHEBI:61560"/>
        <dbReference type="ChEBI" id="CHEBI:173112"/>
        <dbReference type="EC" id="2.7.7.49"/>
    </reaction>
</comment>
<comment type="catalytic activity">
    <reaction evidence="1">
        <text>Endonucleolytic cleavage to 5'-phosphomonoester.</text>
        <dbReference type="EC" id="3.1.26.4"/>
    </reaction>
</comment>
<comment type="activity regulation">
    <text evidence="1">Activated by host HSP70 and HSP40 in vitro to be able to bind the epsilon loop of the pgRNA. Because deletion of the RNase H region renders the protein partly chaperone-independent, the chaperones may be needed indirectly to relieve occlusion of the RNA-binding site by this domain. Inhibited by several reverse-transcriptase inhibitors: Lamivudine, Adefovir and Entecavir.</text>
</comment>
<comment type="domain">
    <text evidence="1">Terminal protein domain (TP) is hepadnavirus-specific. Spacer domain is highly variable and separates the TP and RT domains. Polymerase/reverse-transcriptase domain (RT) and ribonuclease H domain (RH) are similar to retrovirus reverse transcriptase/RNase H.</text>
</comment>
<comment type="domain">
    <text evidence="1">The polymerase/reverse transcriptase (RT) and ribonuclease H (RH) domains are structured in five subdomains: finger, palm, thumb, connection and RNase H. Within the palm subdomain, the 'primer grip' region is thought to be involved in the positioning of the primer terminus for accommodating the incoming nucleotide. The RH domain stabilizes the association of RT with primer-template.</text>
</comment>
<comment type="miscellaneous">
    <text evidence="1">Hepadnaviral virions contain probably just one P protein molecule per particle.</text>
</comment>
<comment type="similarity">
    <text evidence="1">Belongs to the hepadnaviridae P protein family.</text>
</comment>
<dbReference type="EC" id="2.7.7.7" evidence="1"/>
<dbReference type="EC" id="2.7.7.49" evidence="1"/>
<dbReference type="EC" id="3.1.26.4" evidence="1"/>
<dbReference type="EMBL" id="AF121251">
    <property type="protein sequence ID" value="AAF24740.1"/>
    <property type="molecule type" value="Genomic_DNA"/>
</dbReference>
<dbReference type="Proteomes" id="UP000007915">
    <property type="component" value="Genome"/>
</dbReference>
<dbReference type="GO" id="GO:0003677">
    <property type="term" value="F:DNA binding"/>
    <property type="evidence" value="ECO:0007669"/>
    <property type="project" value="UniProtKB-UniRule"/>
</dbReference>
<dbReference type="GO" id="GO:0003887">
    <property type="term" value="F:DNA-directed DNA polymerase activity"/>
    <property type="evidence" value="ECO:0007669"/>
    <property type="project" value="UniProtKB-UniRule"/>
</dbReference>
<dbReference type="GO" id="GO:0046872">
    <property type="term" value="F:metal ion binding"/>
    <property type="evidence" value="ECO:0007669"/>
    <property type="project" value="UniProtKB-UniRule"/>
</dbReference>
<dbReference type="GO" id="GO:0003964">
    <property type="term" value="F:RNA-directed DNA polymerase activity"/>
    <property type="evidence" value="ECO:0007669"/>
    <property type="project" value="UniProtKB-UniRule"/>
</dbReference>
<dbReference type="GO" id="GO:0004523">
    <property type="term" value="F:RNA-DNA hybrid ribonuclease activity"/>
    <property type="evidence" value="ECO:0007669"/>
    <property type="project" value="UniProtKB-UniRule"/>
</dbReference>
<dbReference type="GO" id="GO:0006260">
    <property type="term" value="P:DNA replication"/>
    <property type="evidence" value="ECO:0007669"/>
    <property type="project" value="UniProtKB-UniRule"/>
</dbReference>
<dbReference type="GO" id="GO:0052170">
    <property type="term" value="P:symbiont-mediated suppression of host innate immune response"/>
    <property type="evidence" value="ECO:0007669"/>
    <property type="project" value="UniProtKB-UniRule"/>
</dbReference>
<dbReference type="FunFam" id="3.30.70.270:FF:000009">
    <property type="entry name" value="Protein P"/>
    <property type="match status" value="1"/>
</dbReference>
<dbReference type="Gene3D" id="3.30.70.270">
    <property type="match status" value="1"/>
</dbReference>
<dbReference type="HAMAP" id="MF_04073">
    <property type="entry name" value="HBV_DPOL"/>
    <property type="match status" value="1"/>
</dbReference>
<dbReference type="InterPro" id="IPR043502">
    <property type="entry name" value="DNA/RNA_pol_sf"/>
</dbReference>
<dbReference type="InterPro" id="IPR001462">
    <property type="entry name" value="DNApol_viral_C"/>
</dbReference>
<dbReference type="InterPro" id="IPR000201">
    <property type="entry name" value="DNApol_viral_N"/>
</dbReference>
<dbReference type="InterPro" id="IPR037531">
    <property type="entry name" value="HBV_DPOL"/>
</dbReference>
<dbReference type="InterPro" id="IPR043128">
    <property type="entry name" value="Rev_trsase/Diguanyl_cyclase"/>
</dbReference>
<dbReference type="InterPro" id="IPR000477">
    <property type="entry name" value="RT_dom"/>
</dbReference>
<dbReference type="InterPro" id="IPR051320">
    <property type="entry name" value="Viral_Replic_Matur_Polypro"/>
</dbReference>
<dbReference type="PANTHER" id="PTHR33064">
    <property type="entry name" value="POL PROTEIN"/>
    <property type="match status" value="1"/>
</dbReference>
<dbReference type="PANTHER" id="PTHR33064:SF37">
    <property type="entry name" value="RIBONUCLEASE H"/>
    <property type="match status" value="1"/>
</dbReference>
<dbReference type="Pfam" id="PF00336">
    <property type="entry name" value="DNA_pol_viral_C"/>
    <property type="match status" value="1"/>
</dbReference>
<dbReference type="Pfam" id="PF00242">
    <property type="entry name" value="DNA_pol_viral_N"/>
    <property type="match status" value="1"/>
</dbReference>
<dbReference type="Pfam" id="PF00078">
    <property type="entry name" value="RVT_1"/>
    <property type="match status" value="1"/>
</dbReference>
<dbReference type="SUPFAM" id="SSF56672">
    <property type="entry name" value="DNA/RNA polymerases"/>
    <property type="match status" value="1"/>
</dbReference>
<dbReference type="PROSITE" id="PS50878">
    <property type="entry name" value="RT_POL"/>
    <property type="match status" value="1"/>
</dbReference>